<dbReference type="EC" id="2.5.1.75" evidence="1"/>
<dbReference type="EMBL" id="CP000103">
    <property type="protein sequence ID" value="ABB73401.1"/>
    <property type="molecule type" value="Genomic_DNA"/>
</dbReference>
<dbReference type="RefSeq" id="WP_011379456.1">
    <property type="nucleotide sequence ID" value="NC_007614.1"/>
</dbReference>
<dbReference type="SMR" id="Q2YCX0"/>
<dbReference type="STRING" id="323848.Nmul_A0092"/>
<dbReference type="KEGG" id="nmu:Nmul_A0092"/>
<dbReference type="eggNOG" id="COG0324">
    <property type="taxonomic scope" value="Bacteria"/>
</dbReference>
<dbReference type="HOGENOM" id="CLU_032616_0_0_4"/>
<dbReference type="OrthoDB" id="9776390at2"/>
<dbReference type="Proteomes" id="UP000002718">
    <property type="component" value="Chromosome"/>
</dbReference>
<dbReference type="GO" id="GO:0005524">
    <property type="term" value="F:ATP binding"/>
    <property type="evidence" value="ECO:0007669"/>
    <property type="project" value="UniProtKB-UniRule"/>
</dbReference>
<dbReference type="GO" id="GO:0052381">
    <property type="term" value="F:tRNA dimethylallyltransferase activity"/>
    <property type="evidence" value="ECO:0007669"/>
    <property type="project" value="UniProtKB-UniRule"/>
</dbReference>
<dbReference type="GO" id="GO:0006400">
    <property type="term" value="P:tRNA modification"/>
    <property type="evidence" value="ECO:0007669"/>
    <property type="project" value="TreeGrafter"/>
</dbReference>
<dbReference type="FunFam" id="1.10.20.140:FF:000001">
    <property type="entry name" value="tRNA dimethylallyltransferase"/>
    <property type="match status" value="1"/>
</dbReference>
<dbReference type="Gene3D" id="1.10.20.140">
    <property type="match status" value="1"/>
</dbReference>
<dbReference type="Gene3D" id="3.40.50.300">
    <property type="entry name" value="P-loop containing nucleotide triphosphate hydrolases"/>
    <property type="match status" value="1"/>
</dbReference>
<dbReference type="HAMAP" id="MF_00185">
    <property type="entry name" value="IPP_trans"/>
    <property type="match status" value="1"/>
</dbReference>
<dbReference type="InterPro" id="IPR039657">
    <property type="entry name" value="Dimethylallyltransferase"/>
</dbReference>
<dbReference type="InterPro" id="IPR018022">
    <property type="entry name" value="IPT"/>
</dbReference>
<dbReference type="InterPro" id="IPR027417">
    <property type="entry name" value="P-loop_NTPase"/>
</dbReference>
<dbReference type="NCBIfam" id="TIGR00174">
    <property type="entry name" value="miaA"/>
    <property type="match status" value="1"/>
</dbReference>
<dbReference type="PANTHER" id="PTHR11088">
    <property type="entry name" value="TRNA DIMETHYLALLYLTRANSFERASE"/>
    <property type="match status" value="1"/>
</dbReference>
<dbReference type="PANTHER" id="PTHR11088:SF60">
    <property type="entry name" value="TRNA DIMETHYLALLYLTRANSFERASE"/>
    <property type="match status" value="1"/>
</dbReference>
<dbReference type="Pfam" id="PF01715">
    <property type="entry name" value="IPPT"/>
    <property type="match status" value="1"/>
</dbReference>
<dbReference type="SUPFAM" id="SSF52540">
    <property type="entry name" value="P-loop containing nucleoside triphosphate hydrolases"/>
    <property type="match status" value="2"/>
</dbReference>
<sequence length="323" mass="36615">MKKKTGYSPYPPAIFLMGPTASGKSALALHIARYLPVEIISVDSAQVYRHMNIGTAKPGPEALAATPHHLIDLIDPHEHYSAARFRTDALRTMREIADRGSIPLLAGGTMLYFKTLLEGLSELPSADSDVRAAIEAKARKSGWPAMHQELFRLDSVSAERIKPTDSQRIQRALEVFYLTGKPMSETLRKPKNVSLPYEVVKIALVPGNRQALHQRIACRFEQMLKHGLIDEVRAIRDKFYLSDENPSMRCVGYRQVWMHLENATDALRMREMALAATRQLAKRQLTWLRSMKETREFDCLQENLPEQVKTYLLNTGLKFTEVS</sequence>
<accession>Q2YCX0</accession>
<keyword id="KW-0067">ATP-binding</keyword>
<keyword id="KW-0460">Magnesium</keyword>
<keyword id="KW-0547">Nucleotide-binding</keyword>
<keyword id="KW-1185">Reference proteome</keyword>
<keyword id="KW-0808">Transferase</keyword>
<keyword id="KW-0819">tRNA processing</keyword>
<protein>
    <recommendedName>
        <fullName evidence="1">tRNA dimethylallyltransferase</fullName>
        <ecNumber evidence="1">2.5.1.75</ecNumber>
    </recommendedName>
    <alternativeName>
        <fullName evidence="1">Dimethylallyl diphosphate:tRNA dimethylallyltransferase</fullName>
        <shortName evidence="1">DMAPP:tRNA dimethylallyltransferase</shortName>
        <shortName evidence="1">DMATase</shortName>
    </alternativeName>
    <alternativeName>
        <fullName evidence="1">Isopentenyl-diphosphate:tRNA isopentenyltransferase</fullName>
        <shortName evidence="1">IPP transferase</shortName>
        <shortName evidence="1">IPPT</shortName>
        <shortName evidence="1">IPTase</shortName>
    </alternativeName>
</protein>
<evidence type="ECO:0000255" key="1">
    <source>
        <dbReference type="HAMAP-Rule" id="MF_00185"/>
    </source>
</evidence>
<reference key="1">
    <citation type="submission" date="2005-08" db="EMBL/GenBank/DDBJ databases">
        <title>Complete sequence of chromosome 1 of Nitrosospira multiformis ATCC 25196.</title>
        <authorList>
            <person name="Copeland A."/>
            <person name="Lucas S."/>
            <person name="Lapidus A."/>
            <person name="Barry K."/>
            <person name="Detter J.C."/>
            <person name="Glavina T."/>
            <person name="Hammon N."/>
            <person name="Israni S."/>
            <person name="Pitluck S."/>
            <person name="Chain P."/>
            <person name="Malfatti S."/>
            <person name="Shin M."/>
            <person name="Vergez L."/>
            <person name="Schmutz J."/>
            <person name="Larimer F."/>
            <person name="Land M."/>
            <person name="Hauser L."/>
            <person name="Kyrpides N."/>
            <person name="Lykidis A."/>
            <person name="Richardson P."/>
        </authorList>
    </citation>
    <scope>NUCLEOTIDE SEQUENCE [LARGE SCALE GENOMIC DNA]</scope>
    <source>
        <strain>ATCC 25196 / NCIMB 11849 / C 71</strain>
    </source>
</reference>
<feature type="chain" id="PRO_0000377244" description="tRNA dimethylallyltransferase">
    <location>
        <begin position="1"/>
        <end position="323"/>
    </location>
</feature>
<feature type="region of interest" description="Interaction with substrate tRNA" evidence="1">
    <location>
        <begin position="43"/>
        <end position="46"/>
    </location>
</feature>
<feature type="region of interest" description="Interaction with substrate tRNA" evidence="1">
    <location>
        <begin position="167"/>
        <end position="171"/>
    </location>
</feature>
<feature type="region of interest" description="Interaction with substrate tRNA" evidence="1">
    <location>
        <begin position="249"/>
        <end position="254"/>
    </location>
</feature>
<feature type="binding site" evidence="1">
    <location>
        <begin position="18"/>
        <end position="25"/>
    </location>
    <ligand>
        <name>ATP</name>
        <dbReference type="ChEBI" id="CHEBI:30616"/>
    </ligand>
</feature>
<feature type="binding site" evidence="1">
    <location>
        <begin position="20"/>
        <end position="25"/>
    </location>
    <ligand>
        <name>substrate</name>
    </ligand>
</feature>
<feature type="site" description="Interaction with substrate tRNA" evidence="1">
    <location>
        <position position="109"/>
    </location>
</feature>
<feature type="site" description="Interaction with substrate tRNA" evidence="1">
    <location>
        <position position="131"/>
    </location>
</feature>
<comment type="function">
    <text evidence="1">Catalyzes the transfer of a dimethylallyl group onto the adenine at position 37 in tRNAs that read codons beginning with uridine, leading to the formation of N6-(dimethylallyl)adenosine (i(6)A).</text>
</comment>
<comment type="catalytic activity">
    <reaction evidence="1">
        <text>adenosine(37) in tRNA + dimethylallyl diphosphate = N(6)-dimethylallyladenosine(37) in tRNA + diphosphate</text>
        <dbReference type="Rhea" id="RHEA:26482"/>
        <dbReference type="Rhea" id="RHEA-COMP:10162"/>
        <dbReference type="Rhea" id="RHEA-COMP:10375"/>
        <dbReference type="ChEBI" id="CHEBI:33019"/>
        <dbReference type="ChEBI" id="CHEBI:57623"/>
        <dbReference type="ChEBI" id="CHEBI:74411"/>
        <dbReference type="ChEBI" id="CHEBI:74415"/>
        <dbReference type="EC" id="2.5.1.75"/>
    </reaction>
</comment>
<comment type="cofactor">
    <cofactor evidence="1">
        <name>Mg(2+)</name>
        <dbReference type="ChEBI" id="CHEBI:18420"/>
    </cofactor>
</comment>
<comment type="subunit">
    <text evidence="1">Monomer.</text>
</comment>
<comment type="similarity">
    <text evidence="1">Belongs to the IPP transferase family.</text>
</comment>
<name>MIAA_NITMU</name>
<gene>
    <name evidence="1" type="primary">miaA</name>
    <name type="ordered locus">Nmul_A0092</name>
</gene>
<proteinExistence type="inferred from homology"/>
<organism>
    <name type="scientific">Nitrosospira multiformis (strain ATCC 25196 / NCIMB 11849 / C 71)</name>
    <dbReference type="NCBI Taxonomy" id="323848"/>
    <lineage>
        <taxon>Bacteria</taxon>
        <taxon>Pseudomonadati</taxon>
        <taxon>Pseudomonadota</taxon>
        <taxon>Betaproteobacteria</taxon>
        <taxon>Nitrosomonadales</taxon>
        <taxon>Nitrosomonadaceae</taxon>
        <taxon>Nitrosospira</taxon>
    </lineage>
</organism>